<name>LIPA_SALPA</name>
<organism>
    <name type="scientific">Salmonella paratyphi A (strain ATCC 9150 / SARB42)</name>
    <dbReference type="NCBI Taxonomy" id="295319"/>
    <lineage>
        <taxon>Bacteria</taxon>
        <taxon>Pseudomonadati</taxon>
        <taxon>Pseudomonadota</taxon>
        <taxon>Gammaproteobacteria</taxon>
        <taxon>Enterobacterales</taxon>
        <taxon>Enterobacteriaceae</taxon>
        <taxon>Salmonella</taxon>
    </lineage>
</organism>
<dbReference type="EC" id="2.8.1.8" evidence="1"/>
<dbReference type="EMBL" id="CP000026">
    <property type="protein sequence ID" value="AAV77995.1"/>
    <property type="molecule type" value="Genomic_DNA"/>
</dbReference>
<dbReference type="RefSeq" id="WP_000042640.1">
    <property type="nucleotide sequence ID" value="NC_006511.1"/>
</dbReference>
<dbReference type="SMR" id="Q5PM97"/>
<dbReference type="KEGG" id="spt:SPA2101"/>
<dbReference type="HOGENOM" id="CLU_033144_2_1_6"/>
<dbReference type="UniPathway" id="UPA00538">
    <property type="reaction ID" value="UER00593"/>
</dbReference>
<dbReference type="Proteomes" id="UP000008185">
    <property type="component" value="Chromosome"/>
</dbReference>
<dbReference type="GO" id="GO:0005737">
    <property type="term" value="C:cytoplasm"/>
    <property type="evidence" value="ECO:0007669"/>
    <property type="project" value="UniProtKB-SubCell"/>
</dbReference>
<dbReference type="GO" id="GO:0051539">
    <property type="term" value="F:4 iron, 4 sulfur cluster binding"/>
    <property type="evidence" value="ECO:0007669"/>
    <property type="project" value="UniProtKB-UniRule"/>
</dbReference>
<dbReference type="GO" id="GO:0016992">
    <property type="term" value="F:lipoate synthase activity"/>
    <property type="evidence" value="ECO:0007669"/>
    <property type="project" value="UniProtKB-UniRule"/>
</dbReference>
<dbReference type="GO" id="GO:0046872">
    <property type="term" value="F:metal ion binding"/>
    <property type="evidence" value="ECO:0007669"/>
    <property type="project" value="UniProtKB-KW"/>
</dbReference>
<dbReference type="CDD" id="cd01335">
    <property type="entry name" value="Radical_SAM"/>
    <property type="match status" value="1"/>
</dbReference>
<dbReference type="FunFam" id="3.20.20.70:FF:000023">
    <property type="entry name" value="Lipoyl synthase"/>
    <property type="match status" value="1"/>
</dbReference>
<dbReference type="Gene3D" id="3.20.20.70">
    <property type="entry name" value="Aldolase class I"/>
    <property type="match status" value="1"/>
</dbReference>
<dbReference type="HAMAP" id="MF_00206">
    <property type="entry name" value="Lipoyl_synth"/>
    <property type="match status" value="1"/>
</dbReference>
<dbReference type="InterPro" id="IPR013785">
    <property type="entry name" value="Aldolase_TIM"/>
</dbReference>
<dbReference type="InterPro" id="IPR006638">
    <property type="entry name" value="Elp3/MiaA/NifB-like_rSAM"/>
</dbReference>
<dbReference type="InterPro" id="IPR031691">
    <property type="entry name" value="LIAS_N"/>
</dbReference>
<dbReference type="InterPro" id="IPR003698">
    <property type="entry name" value="Lipoyl_synth"/>
</dbReference>
<dbReference type="InterPro" id="IPR007197">
    <property type="entry name" value="rSAM"/>
</dbReference>
<dbReference type="NCBIfam" id="TIGR00510">
    <property type="entry name" value="lipA"/>
    <property type="match status" value="1"/>
</dbReference>
<dbReference type="NCBIfam" id="NF004019">
    <property type="entry name" value="PRK05481.1"/>
    <property type="match status" value="1"/>
</dbReference>
<dbReference type="NCBIfam" id="NF009544">
    <property type="entry name" value="PRK12928.1"/>
    <property type="match status" value="1"/>
</dbReference>
<dbReference type="PANTHER" id="PTHR10949">
    <property type="entry name" value="LIPOYL SYNTHASE"/>
    <property type="match status" value="1"/>
</dbReference>
<dbReference type="PANTHER" id="PTHR10949:SF0">
    <property type="entry name" value="LIPOYL SYNTHASE, MITOCHONDRIAL"/>
    <property type="match status" value="1"/>
</dbReference>
<dbReference type="Pfam" id="PF16881">
    <property type="entry name" value="LIAS_N"/>
    <property type="match status" value="1"/>
</dbReference>
<dbReference type="Pfam" id="PF04055">
    <property type="entry name" value="Radical_SAM"/>
    <property type="match status" value="1"/>
</dbReference>
<dbReference type="PIRSF" id="PIRSF005963">
    <property type="entry name" value="Lipoyl_synth"/>
    <property type="match status" value="1"/>
</dbReference>
<dbReference type="SFLD" id="SFLDF00271">
    <property type="entry name" value="lipoyl_synthase"/>
    <property type="match status" value="1"/>
</dbReference>
<dbReference type="SFLD" id="SFLDS00029">
    <property type="entry name" value="Radical_SAM"/>
    <property type="match status" value="1"/>
</dbReference>
<dbReference type="SMART" id="SM00729">
    <property type="entry name" value="Elp3"/>
    <property type="match status" value="1"/>
</dbReference>
<dbReference type="SUPFAM" id="SSF102114">
    <property type="entry name" value="Radical SAM enzymes"/>
    <property type="match status" value="1"/>
</dbReference>
<dbReference type="PROSITE" id="PS51918">
    <property type="entry name" value="RADICAL_SAM"/>
    <property type="match status" value="1"/>
</dbReference>
<sequence>MSKPIVMERGVKYRDADKMALIPVKNVVTERDALLRKPEWMKIKLPADSTRIQGIKAAMRKNGLHSVCEEASCPNLAECFNHGTATFMILGAICTRRCPFCDVAHGRPVAPDAEEPQKLAQTIADMALRYVVITSVDRDDLRDGGAQHFADCITAIRAKSPEIKIETLVPDFRGRMDRALDILNATPPDVFNHNLENVPRIYRQVRPGADYNWSLKLLERFKEAHPEIPTKSGLMVGLGETNAEIIEVMRDLRRHGVTMLTLGQYLQPSRHHLPVQRYVSPEEFDEMKAEALAMGFTHAACGPFVRSSYHADLQAKGMEVK</sequence>
<comment type="function">
    <text evidence="1">Catalyzes the radical-mediated insertion of two sulfur atoms into the C-6 and C-8 positions of the octanoyl moiety bound to the lipoyl domains of lipoate-dependent enzymes, thereby converting the octanoylated domains into lipoylated derivatives.</text>
</comment>
<comment type="catalytic activity">
    <reaction evidence="1">
        <text>[[Fe-S] cluster scaffold protein carrying a second [4Fe-4S](2+) cluster] + N(6)-octanoyl-L-lysyl-[protein] + 2 oxidized [2Fe-2S]-[ferredoxin] + 2 S-adenosyl-L-methionine + 4 H(+) = [[Fe-S] cluster scaffold protein] + N(6)-[(R)-dihydrolipoyl]-L-lysyl-[protein] + 4 Fe(3+) + 2 hydrogen sulfide + 2 5'-deoxyadenosine + 2 L-methionine + 2 reduced [2Fe-2S]-[ferredoxin]</text>
        <dbReference type="Rhea" id="RHEA:16585"/>
        <dbReference type="Rhea" id="RHEA-COMP:9928"/>
        <dbReference type="Rhea" id="RHEA-COMP:10000"/>
        <dbReference type="Rhea" id="RHEA-COMP:10001"/>
        <dbReference type="Rhea" id="RHEA-COMP:10475"/>
        <dbReference type="Rhea" id="RHEA-COMP:14568"/>
        <dbReference type="Rhea" id="RHEA-COMP:14569"/>
        <dbReference type="ChEBI" id="CHEBI:15378"/>
        <dbReference type="ChEBI" id="CHEBI:17319"/>
        <dbReference type="ChEBI" id="CHEBI:29034"/>
        <dbReference type="ChEBI" id="CHEBI:29919"/>
        <dbReference type="ChEBI" id="CHEBI:33722"/>
        <dbReference type="ChEBI" id="CHEBI:33737"/>
        <dbReference type="ChEBI" id="CHEBI:33738"/>
        <dbReference type="ChEBI" id="CHEBI:57844"/>
        <dbReference type="ChEBI" id="CHEBI:59789"/>
        <dbReference type="ChEBI" id="CHEBI:78809"/>
        <dbReference type="ChEBI" id="CHEBI:83100"/>
        <dbReference type="EC" id="2.8.1.8"/>
    </reaction>
</comment>
<comment type="cofactor">
    <cofactor evidence="1">
        <name>[4Fe-4S] cluster</name>
        <dbReference type="ChEBI" id="CHEBI:49883"/>
    </cofactor>
    <text evidence="1">Binds 2 [4Fe-4S] clusters per subunit. One cluster is coordinated with 3 cysteines and an exchangeable S-adenosyl-L-methionine.</text>
</comment>
<comment type="pathway">
    <text evidence="1">Protein modification; protein lipoylation via endogenous pathway; protein N(6)-(lipoyl)lysine from octanoyl-[acyl-carrier-protein]: step 2/2.</text>
</comment>
<comment type="subcellular location">
    <subcellularLocation>
        <location evidence="1">Cytoplasm</location>
    </subcellularLocation>
</comment>
<comment type="similarity">
    <text evidence="1">Belongs to the radical SAM superfamily. Lipoyl synthase family.</text>
</comment>
<proteinExistence type="inferred from homology"/>
<protein>
    <recommendedName>
        <fullName evidence="1">Lipoyl synthase</fullName>
        <ecNumber evidence="1">2.8.1.8</ecNumber>
    </recommendedName>
    <alternativeName>
        <fullName evidence="1">Lip-syn</fullName>
        <shortName evidence="1">LS</shortName>
    </alternativeName>
    <alternativeName>
        <fullName evidence="1">Lipoate synthase</fullName>
    </alternativeName>
    <alternativeName>
        <fullName evidence="1">Lipoic acid synthase</fullName>
    </alternativeName>
    <alternativeName>
        <fullName evidence="1">Sulfur insertion protein LipA</fullName>
    </alternativeName>
</protein>
<accession>Q5PM97</accession>
<evidence type="ECO:0000255" key="1">
    <source>
        <dbReference type="HAMAP-Rule" id="MF_00206"/>
    </source>
</evidence>
<evidence type="ECO:0000255" key="2">
    <source>
        <dbReference type="PROSITE-ProRule" id="PRU01266"/>
    </source>
</evidence>
<reference key="1">
    <citation type="journal article" date="2004" name="Nat. Genet.">
        <title>Comparison of genome degradation in Paratyphi A and Typhi, human-restricted serovars of Salmonella enterica that cause typhoid.</title>
        <authorList>
            <person name="McClelland M."/>
            <person name="Sanderson K.E."/>
            <person name="Clifton S.W."/>
            <person name="Latreille P."/>
            <person name="Porwollik S."/>
            <person name="Sabo A."/>
            <person name="Meyer R."/>
            <person name="Bieri T."/>
            <person name="Ozersky P."/>
            <person name="McLellan M."/>
            <person name="Harkins C.R."/>
            <person name="Wang C."/>
            <person name="Nguyen C."/>
            <person name="Berghoff A."/>
            <person name="Elliott G."/>
            <person name="Kohlberg S."/>
            <person name="Strong C."/>
            <person name="Du F."/>
            <person name="Carter J."/>
            <person name="Kremizki C."/>
            <person name="Layman D."/>
            <person name="Leonard S."/>
            <person name="Sun H."/>
            <person name="Fulton L."/>
            <person name="Nash W."/>
            <person name="Miner T."/>
            <person name="Minx P."/>
            <person name="Delehaunty K."/>
            <person name="Fronick C."/>
            <person name="Magrini V."/>
            <person name="Nhan M."/>
            <person name="Warren W."/>
            <person name="Florea L."/>
            <person name="Spieth J."/>
            <person name="Wilson R.K."/>
        </authorList>
    </citation>
    <scope>NUCLEOTIDE SEQUENCE [LARGE SCALE GENOMIC DNA]</scope>
    <source>
        <strain>ATCC 9150 / SARB42</strain>
    </source>
</reference>
<feature type="chain" id="PRO_1000012270" description="Lipoyl synthase">
    <location>
        <begin position="1"/>
        <end position="321"/>
    </location>
</feature>
<feature type="domain" description="Radical SAM core" evidence="2">
    <location>
        <begin position="80"/>
        <end position="297"/>
    </location>
</feature>
<feature type="binding site" evidence="1">
    <location>
        <position position="68"/>
    </location>
    <ligand>
        <name>[4Fe-4S] cluster</name>
        <dbReference type="ChEBI" id="CHEBI:49883"/>
        <label>1</label>
    </ligand>
</feature>
<feature type="binding site" evidence="1">
    <location>
        <position position="73"/>
    </location>
    <ligand>
        <name>[4Fe-4S] cluster</name>
        <dbReference type="ChEBI" id="CHEBI:49883"/>
        <label>1</label>
    </ligand>
</feature>
<feature type="binding site" evidence="1">
    <location>
        <position position="79"/>
    </location>
    <ligand>
        <name>[4Fe-4S] cluster</name>
        <dbReference type="ChEBI" id="CHEBI:49883"/>
        <label>1</label>
    </ligand>
</feature>
<feature type="binding site" evidence="1">
    <location>
        <position position="94"/>
    </location>
    <ligand>
        <name>[4Fe-4S] cluster</name>
        <dbReference type="ChEBI" id="CHEBI:49883"/>
        <label>2</label>
        <note>4Fe-4S-S-AdoMet</note>
    </ligand>
</feature>
<feature type="binding site" evidence="1">
    <location>
        <position position="98"/>
    </location>
    <ligand>
        <name>[4Fe-4S] cluster</name>
        <dbReference type="ChEBI" id="CHEBI:49883"/>
        <label>2</label>
        <note>4Fe-4S-S-AdoMet</note>
    </ligand>
</feature>
<feature type="binding site" evidence="1">
    <location>
        <position position="101"/>
    </location>
    <ligand>
        <name>[4Fe-4S] cluster</name>
        <dbReference type="ChEBI" id="CHEBI:49883"/>
        <label>2</label>
        <note>4Fe-4S-S-AdoMet</note>
    </ligand>
</feature>
<feature type="binding site" evidence="1">
    <location>
        <position position="308"/>
    </location>
    <ligand>
        <name>[4Fe-4S] cluster</name>
        <dbReference type="ChEBI" id="CHEBI:49883"/>
        <label>1</label>
    </ligand>
</feature>
<gene>
    <name evidence="1" type="primary">lipA</name>
    <name type="ordered locus">SPA2101</name>
</gene>
<keyword id="KW-0004">4Fe-4S</keyword>
<keyword id="KW-0963">Cytoplasm</keyword>
<keyword id="KW-0408">Iron</keyword>
<keyword id="KW-0411">Iron-sulfur</keyword>
<keyword id="KW-0479">Metal-binding</keyword>
<keyword id="KW-0949">S-adenosyl-L-methionine</keyword>
<keyword id="KW-0808">Transferase</keyword>